<sequence>MDYKHNFATSPDSFLDGRQNPLLYTDFLSSNKELIYKQPSGPGLVDSAYNFHHQNSLHDRSVQENLGPMFQPFGVDISHLPITNPPIFQSSLPAFDQPVYKRRISISNGQISQLGEDLETVENLYNCQPPILSSKAQQNPNPQQVANPSAAIYPSFSSNELQNVPQPHEQATVIPEAAPQTGSKNIYAAMTPYDSNIKLNIPAVAATCDIPSATPSIPSGDSTMNQAYINMQLRLQAQMQTKAWKNAQLNVHPCTPASNSSVSSSSSCQNINDHNIENQSVHSSISHGVNHHTVNNSCQNAELNISSSLPYESKCPDVNLTHANSKPQYKDATSALKNNINSEKDVHTAPFSSMHTTATFQIKQEARPQKIENNTAGLKDGAKAWKRARLLERNRIAASKCRQRKKMSQLQLQREFDQISKENTMMKKKIENYEKLVQKMKKISRLHMQECTINGGNNSYQSLQNKDSDVNGFLKMIEEMIRSSSLYDE</sequence>
<protein>
    <recommendedName>
        <fullName>ATF/CREB activator 1</fullName>
    </recommendedName>
</protein>
<dbReference type="EMBL" id="U18796">
    <property type="protein sequence ID" value="AAB64580.1"/>
    <property type="molecule type" value="Genomic_DNA"/>
</dbReference>
<dbReference type="EMBL" id="BK006939">
    <property type="protein sequence ID" value="DAA07700.1"/>
    <property type="molecule type" value="Genomic_DNA"/>
</dbReference>
<dbReference type="PIR" id="S50548">
    <property type="entry name" value="S50548"/>
</dbReference>
<dbReference type="RefSeq" id="NP_010964.3">
    <property type="nucleotide sequence ID" value="NM_001178936.3"/>
</dbReference>
<dbReference type="SMR" id="P39970"/>
<dbReference type="BioGRID" id="36782">
    <property type="interactions" value="77"/>
</dbReference>
<dbReference type="DIP" id="DIP-1535N"/>
<dbReference type="FunCoup" id="P39970">
    <property type="interactions" value="422"/>
</dbReference>
<dbReference type="IntAct" id="P39970">
    <property type="interactions" value="6"/>
</dbReference>
<dbReference type="MINT" id="P39970"/>
<dbReference type="STRING" id="4932.YER045C"/>
<dbReference type="GlyGen" id="P39970">
    <property type="glycosylation" value="1 site"/>
</dbReference>
<dbReference type="iPTMnet" id="P39970"/>
<dbReference type="PaxDb" id="4932-YER045C"/>
<dbReference type="PeptideAtlas" id="P39970"/>
<dbReference type="EnsemblFungi" id="YER045C_mRNA">
    <property type="protein sequence ID" value="YER045C"/>
    <property type="gene ID" value="YER045C"/>
</dbReference>
<dbReference type="GeneID" id="856769"/>
<dbReference type="KEGG" id="sce:YER045C"/>
<dbReference type="AGR" id="SGD:S000000847"/>
<dbReference type="SGD" id="S000000847">
    <property type="gene designation" value="ACA1"/>
</dbReference>
<dbReference type="VEuPathDB" id="FungiDB:YER045C"/>
<dbReference type="eggNOG" id="KOG1414">
    <property type="taxonomic scope" value="Eukaryota"/>
</dbReference>
<dbReference type="GeneTree" id="ENSGT00940000176485"/>
<dbReference type="HOGENOM" id="CLU_638108_0_0_1"/>
<dbReference type="InParanoid" id="P39970"/>
<dbReference type="OMA" id="NQAYINM"/>
<dbReference type="OrthoDB" id="295274at2759"/>
<dbReference type="BioCyc" id="YEAST:G3O-30224-MONOMER"/>
<dbReference type="Reactome" id="R-SCE-3214847">
    <property type="pathway name" value="HATs acetylate histones"/>
</dbReference>
<dbReference type="Reactome" id="R-SCE-450341">
    <property type="pathway name" value="Activation of the AP-1 family of transcription factors"/>
</dbReference>
<dbReference type="BioGRID-ORCS" id="856769">
    <property type="hits" value="4 hits in 10 CRISPR screens"/>
</dbReference>
<dbReference type="PRO" id="PR:P39970"/>
<dbReference type="Proteomes" id="UP000002311">
    <property type="component" value="Chromosome V"/>
</dbReference>
<dbReference type="RNAct" id="P39970">
    <property type="molecule type" value="protein"/>
</dbReference>
<dbReference type="GO" id="GO:0005634">
    <property type="term" value="C:nucleus"/>
    <property type="evidence" value="ECO:0000305"/>
    <property type="project" value="SGD"/>
</dbReference>
<dbReference type="GO" id="GO:0001228">
    <property type="term" value="F:DNA-binding transcription activator activity, RNA polymerase II-specific"/>
    <property type="evidence" value="ECO:0000314"/>
    <property type="project" value="SGD"/>
</dbReference>
<dbReference type="GO" id="GO:0000981">
    <property type="term" value="F:DNA-binding transcription factor activity, RNA polymerase II-specific"/>
    <property type="evidence" value="ECO:0000318"/>
    <property type="project" value="GO_Central"/>
</dbReference>
<dbReference type="GO" id="GO:0000978">
    <property type="term" value="F:RNA polymerase II cis-regulatory region sequence-specific DNA binding"/>
    <property type="evidence" value="ECO:0000318"/>
    <property type="project" value="GO_Central"/>
</dbReference>
<dbReference type="GO" id="GO:0043565">
    <property type="term" value="F:sequence-specific DNA binding"/>
    <property type="evidence" value="ECO:0000314"/>
    <property type="project" value="SGD"/>
</dbReference>
<dbReference type="GO" id="GO:0045944">
    <property type="term" value="P:positive regulation of transcription by RNA polymerase II"/>
    <property type="evidence" value="ECO:0000314"/>
    <property type="project" value="SGD"/>
</dbReference>
<dbReference type="GO" id="GO:0006357">
    <property type="term" value="P:regulation of transcription by RNA polymerase II"/>
    <property type="evidence" value="ECO:0000318"/>
    <property type="project" value="GO_Central"/>
</dbReference>
<dbReference type="CDD" id="cd14687">
    <property type="entry name" value="bZIP_ATF2"/>
    <property type="match status" value="1"/>
</dbReference>
<dbReference type="FunFam" id="1.20.5.170:FF:000053">
    <property type="entry name" value="BZIP transcription factor AtfA"/>
    <property type="match status" value="1"/>
</dbReference>
<dbReference type="Gene3D" id="1.20.5.170">
    <property type="match status" value="1"/>
</dbReference>
<dbReference type="InterPro" id="IPR004827">
    <property type="entry name" value="bZIP"/>
</dbReference>
<dbReference type="InterPro" id="IPR046347">
    <property type="entry name" value="bZIP_sf"/>
</dbReference>
<dbReference type="InterPro" id="IPR051027">
    <property type="entry name" value="bZIP_transcription_factors"/>
</dbReference>
<dbReference type="PANTHER" id="PTHR19304">
    <property type="entry name" value="CYCLIC-AMP RESPONSE ELEMENT BINDING PROTEIN"/>
    <property type="match status" value="1"/>
</dbReference>
<dbReference type="Pfam" id="PF00170">
    <property type="entry name" value="bZIP_1"/>
    <property type="match status" value="1"/>
</dbReference>
<dbReference type="SMART" id="SM00338">
    <property type="entry name" value="BRLZ"/>
    <property type="match status" value="1"/>
</dbReference>
<dbReference type="SUPFAM" id="SSF57959">
    <property type="entry name" value="Leucine zipper domain"/>
    <property type="match status" value="1"/>
</dbReference>
<dbReference type="PROSITE" id="PS50217">
    <property type="entry name" value="BZIP"/>
    <property type="match status" value="1"/>
</dbReference>
<dbReference type="PROSITE" id="PS00036">
    <property type="entry name" value="BZIP_BASIC"/>
    <property type="match status" value="1"/>
</dbReference>
<comment type="function">
    <text evidence="2 3 4 5">Transcriptional activator of promoters containing ATF/CREB sites. Can independently stimulate transcription through ATF/CREB sites. Important for a variety of biological functions including growth on non-optimal carbon sources. Regulates the expression of COS8. Has efficient silencing blocking activities.</text>
</comment>
<comment type="interaction">
    <interactant intactId="EBI-22524">
        <id>P39970</id>
    </interactant>
    <interactant intactId="EBI-2052">
        <id>P40535</id>
        <label>CST6</label>
    </interactant>
    <organismsDiffer>false</organismsDiffer>
    <experiments>3</experiments>
</comment>
<comment type="subcellular location">
    <subcellularLocation>
        <location evidence="1">Nucleus</location>
    </subcellularLocation>
</comment>
<comment type="induction">
    <text evidence="6">By nitrogen limitation.</text>
</comment>
<comment type="similarity">
    <text evidence="7">Belongs to the bZIP family.</text>
</comment>
<comment type="caution">
    <text evidence="7">This ORF was incorrectly assigned as MEI4.</text>
</comment>
<evidence type="ECO:0000255" key="1">
    <source>
        <dbReference type="PROSITE-ProRule" id="PRU00978"/>
    </source>
</evidence>
<evidence type="ECO:0000269" key="2">
    <source>
    </source>
</evidence>
<evidence type="ECO:0000269" key="3">
    <source>
    </source>
</evidence>
<evidence type="ECO:0000269" key="4">
    <source>
    </source>
</evidence>
<evidence type="ECO:0000269" key="5">
    <source>
    </source>
</evidence>
<evidence type="ECO:0000269" key="6">
    <source>
    </source>
</evidence>
<evidence type="ECO:0000305" key="7"/>
<proteinExistence type="evidence at protein level"/>
<accession>P39970</accession>
<accession>D3DLU6</accession>
<keyword id="KW-0238">DNA-binding</keyword>
<keyword id="KW-0539">Nucleus</keyword>
<keyword id="KW-1185">Reference proteome</keyword>
<keyword id="KW-0804">Transcription</keyword>
<keyword id="KW-0805">Transcription regulation</keyword>
<gene>
    <name type="primary">ACA1</name>
    <name type="ordered locus">YER045C</name>
</gene>
<name>ACA1_YEAST</name>
<reference key="1">
    <citation type="journal article" date="1997" name="Nature">
        <title>The nucleotide sequence of Saccharomyces cerevisiae chromosome V.</title>
        <authorList>
            <person name="Dietrich F.S."/>
            <person name="Mulligan J.T."/>
            <person name="Hennessy K.M."/>
            <person name="Yelton M.A."/>
            <person name="Allen E."/>
            <person name="Araujo R."/>
            <person name="Aviles E."/>
            <person name="Berno A."/>
            <person name="Brennan T."/>
            <person name="Carpenter J."/>
            <person name="Chen E."/>
            <person name="Cherry J.M."/>
            <person name="Chung E."/>
            <person name="Duncan M."/>
            <person name="Guzman E."/>
            <person name="Hartzell G."/>
            <person name="Hunicke-Smith S."/>
            <person name="Hyman R.W."/>
            <person name="Kayser A."/>
            <person name="Komp C."/>
            <person name="Lashkari D."/>
            <person name="Lew H."/>
            <person name="Lin D."/>
            <person name="Mosedale D."/>
            <person name="Nakahara K."/>
            <person name="Namath A."/>
            <person name="Norgren R."/>
            <person name="Oefner P."/>
            <person name="Oh C."/>
            <person name="Petel F.X."/>
            <person name="Roberts D."/>
            <person name="Sehl P."/>
            <person name="Schramm S."/>
            <person name="Shogren T."/>
            <person name="Smith V."/>
            <person name="Taylor P."/>
            <person name="Wei Y."/>
            <person name="Botstein D."/>
            <person name="Davis R.W."/>
        </authorList>
    </citation>
    <scope>NUCLEOTIDE SEQUENCE [LARGE SCALE GENOMIC DNA]</scope>
    <source>
        <strain>ATCC 204508 / S288c</strain>
    </source>
</reference>
<reference key="2">
    <citation type="journal article" date="2014" name="G3 (Bethesda)">
        <title>The reference genome sequence of Saccharomyces cerevisiae: Then and now.</title>
        <authorList>
            <person name="Engel S.R."/>
            <person name="Dietrich F.S."/>
            <person name="Fisk D.G."/>
            <person name="Binkley G."/>
            <person name="Balakrishnan R."/>
            <person name="Costanzo M.C."/>
            <person name="Dwight S.S."/>
            <person name="Hitz B.C."/>
            <person name="Karra K."/>
            <person name="Nash R.S."/>
            <person name="Weng S."/>
            <person name="Wong E.D."/>
            <person name="Lloyd P."/>
            <person name="Skrzypek M.S."/>
            <person name="Miyasato S.R."/>
            <person name="Simison M."/>
            <person name="Cherry J.M."/>
        </authorList>
    </citation>
    <scope>GENOME REANNOTATION</scope>
    <source>
        <strain>ATCC 204508 / S288c</strain>
    </source>
</reference>
<reference key="3">
    <citation type="journal article" date="2000" name="Mol. Cell. Biol.">
        <title>Aca1 and Aca2, ATF/CREB activators in Saccharomyces cerevisiae, are important for carbon source utilization but not the response to stress.</title>
        <authorList>
            <person name="Garcia-Gimeno M.A."/>
            <person name="Struhl K."/>
        </authorList>
    </citation>
    <scope>FUNCTION</scope>
</reference>
<reference key="4">
    <citation type="journal article" date="2002" name="J. Mol. Biol.">
        <title>ATF/CREB sites present in sub-telomeric regions of Saccharomyces cerevisiae chromosomes are part of promoters and act as UAS/URS of highly conserved COS genes.</title>
        <authorList>
            <person name="Spode I."/>
            <person name="Maiwald D."/>
            <person name="Hollenberg C.P."/>
            <person name="Suckow M."/>
        </authorList>
    </citation>
    <scope>FUNCTION</scope>
</reference>
<reference key="5">
    <citation type="journal article" date="2004" name="Mol. Cell. Biol.">
        <title>Barrier proteins remodel and modify chromatin to restrict silenced domains.</title>
        <authorList>
            <person name="Oki M."/>
            <person name="Valenzuela L."/>
            <person name="Chiba T."/>
            <person name="Ito T."/>
            <person name="Kamakaka R.T."/>
        </authorList>
    </citation>
    <scope>FUNCTION</scope>
</reference>
<reference key="6">
    <citation type="journal article" date="2006" name="Nucleic Acids Res.">
        <title>Transcriptional activators in yeast.</title>
        <authorList>
            <person name="Titz B."/>
            <person name="Thomas S."/>
            <person name="Rajagopala S.V."/>
            <person name="Chiba T."/>
            <person name="Ito T."/>
            <person name="Uetz P."/>
        </authorList>
    </citation>
    <scope>FUNCTION</scope>
</reference>
<reference key="7">
    <citation type="journal article" date="2007" name="Antonie Van Leeuwenhoek">
        <title>The nature of the nitrogen source added to nitrogen depleted vinifications conducted by a Saccharomyces cerevisiae strain in synthetic must affects gene expression and the levels of several volatile compounds.</title>
        <authorList>
            <person name="Jimenez-Marti E."/>
            <person name="Aranda A."/>
            <person name="Mendes-Ferreira A."/>
            <person name="Mendes-Faia A."/>
            <person name="del Olmo M.L."/>
        </authorList>
    </citation>
    <scope>INDUCTION</scope>
</reference>
<organism>
    <name type="scientific">Saccharomyces cerevisiae (strain ATCC 204508 / S288c)</name>
    <name type="common">Baker's yeast</name>
    <dbReference type="NCBI Taxonomy" id="559292"/>
    <lineage>
        <taxon>Eukaryota</taxon>
        <taxon>Fungi</taxon>
        <taxon>Dikarya</taxon>
        <taxon>Ascomycota</taxon>
        <taxon>Saccharomycotina</taxon>
        <taxon>Saccharomycetes</taxon>
        <taxon>Saccharomycetales</taxon>
        <taxon>Saccharomycetaceae</taxon>
        <taxon>Saccharomyces</taxon>
    </lineage>
</organism>
<feature type="chain" id="PRO_0000076537" description="ATF/CREB activator 1">
    <location>
        <begin position="1"/>
        <end position="489"/>
    </location>
</feature>
<feature type="domain" description="bZIP" evidence="1">
    <location>
        <begin position="384"/>
        <end position="447"/>
    </location>
</feature>
<feature type="region of interest" description="Basic motif" evidence="1">
    <location>
        <begin position="386"/>
        <end position="406"/>
    </location>
</feature>
<feature type="region of interest" description="Leucine-zipper" evidence="1">
    <location>
        <begin position="412"/>
        <end position="419"/>
    </location>
</feature>